<reference key="1">
    <citation type="journal article" date="2003" name="Nat. Genet.">
        <title>Comparative analysis of the genome sequences of Bordetella pertussis, Bordetella parapertussis and Bordetella bronchiseptica.</title>
        <authorList>
            <person name="Parkhill J."/>
            <person name="Sebaihia M."/>
            <person name="Preston A."/>
            <person name="Murphy L.D."/>
            <person name="Thomson N.R."/>
            <person name="Harris D.E."/>
            <person name="Holden M.T.G."/>
            <person name="Churcher C.M."/>
            <person name="Bentley S.D."/>
            <person name="Mungall K.L."/>
            <person name="Cerdeno-Tarraga A.-M."/>
            <person name="Temple L."/>
            <person name="James K.D."/>
            <person name="Harris B."/>
            <person name="Quail M.A."/>
            <person name="Achtman M."/>
            <person name="Atkin R."/>
            <person name="Baker S."/>
            <person name="Basham D."/>
            <person name="Bason N."/>
            <person name="Cherevach I."/>
            <person name="Chillingworth T."/>
            <person name="Collins M."/>
            <person name="Cronin A."/>
            <person name="Davis P."/>
            <person name="Doggett J."/>
            <person name="Feltwell T."/>
            <person name="Goble A."/>
            <person name="Hamlin N."/>
            <person name="Hauser H."/>
            <person name="Holroyd S."/>
            <person name="Jagels K."/>
            <person name="Leather S."/>
            <person name="Moule S."/>
            <person name="Norberczak H."/>
            <person name="O'Neil S."/>
            <person name="Ormond D."/>
            <person name="Price C."/>
            <person name="Rabbinowitsch E."/>
            <person name="Rutter S."/>
            <person name="Sanders M."/>
            <person name="Saunders D."/>
            <person name="Seeger K."/>
            <person name="Sharp S."/>
            <person name="Simmonds M."/>
            <person name="Skelton J."/>
            <person name="Squares R."/>
            <person name="Squares S."/>
            <person name="Stevens K."/>
            <person name="Unwin L."/>
            <person name="Whitehead S."/>
            <person name="Barrell B.G."/>
            <person name="Maskell D.J."/>
        </authorList>
    </citation>
    <scope>NUCLEOTIDE SEQUENCE [LARGE SCALE GENOMIC DNA]</scope>
    <source>
        <strain>Tohama I / ATCC BAA-589 / NCTC 13251</strain>
    </source>
</reference>
<evidence type="ECO:0000255" key="1">
    <source>
        <dbReference type="HAMAP-Rule" id="MF_00149"/>
    </source>
</evidence>
<evidence type="ECO:0000256" key="2">
    <source>
        <dbReference type="SAM" id="MobiDB-lite"/>
    </source>
</evidence>
<accession>Q7W0A6</accession>
<keyword id="KW-0227">DNA damage</keyword>
<keyword id="KW-0234">DNA repair</keyword>
<keyword id="KW-1185">Reference proteome</keyword>
<proteinExistence type="inferred from homology"/>
<gene>
    <name evidence="1" type="primary">mutL</name>
    <name type="ordered locus">BP0244</name>
</gene>
<comment type="function">
    <text evidence="1">This protein is involved in the repair of mismatches in DNA. It is required for dam-dependent methyl-directed DNA mismatch repair. May act as a 'molecular matchmaker', a protein that promotes the formation of a stable complex between two or more DNA-binding proteins in an ATP-dependent manner without itself being part of a final effector complex.</text>
</comment>
<comment type="similarity">
    <text evidence="1">Belongs to the DNA mismatch repair MutL/HexB family.</text>
</comment>
<name>MUTL_BORPE</name>
<sequence length="629" mass="67950">MSDRRPIATLPDLLISQIAAGEVIERPASVLKEILENAIDAGARAIEVRLEGGGIRRIAVTDDGSGIPPEELPLALTRHATSKIRSLDELESVASMGFRGEALASIASVADLTIISRTRGAEHAWQIDGGSLQVSPASGPPGTTIDVRQLFDRVPARRKFLRSEATEFGHCVDAMERIALAHPEVAFRLFHHDRAQRQWLPADHGQRIRDVLGAEFVGHVLPVLAAAGAIALMGMVTRPTAARARADRQYLYVNGRFVRDRTVSHALRSAYADVLHGDRQPAYVLYLDIDPGAVDVNVHPAKHEVRFRDSGAVHRFVSQVVGQTLAQTGGAEAVPAGVPDGAAPDTAYAGEPAAAAPGLAEPRAPYPAAYPSPGQSPYQGSPARPHTQVPFRLHGEPAGIPATDWQSLYRPLPGDAAPAATALRAAPATPLPTADEHPLGQALAQLHGIYILAQNSRGLVLVDMHAAHERVVYEQLKRALDDRALPRQDLLVPVVFHAAEKDVALVEEHETQLNELGFEMRPSGPASIAVRSVPALLARGDIESLARAVLRDLGAVGVSRLLTEQRNELLSTMACHGSVRANRRLTLEEMNALLRQMEITERADQCNHGRPTWVQWSVNDLDKLFLRGQ</sequence>
<feature type="chain" id="PRO_1000009993" description="DNA mismatch repair protein MutL">
    <location>
        <begin position="1"/>
        <end position="629"/>
    </location>
</feature>
<feature type="region of interest" description="Disordered" evidence="2">
    <location>
        <begin position="358"/>
        <end position="397"/>
    </location>
</feature>
<feature type="compositionally biased region" description="Low complexity" evidence="2">
    <location>
        <begin position="371"/>
        <end position="382"/>
    </location>
</feature>
<organism>
    <name type="scientific">Bordetella pertussis (strain Tohama I / ATCC BAA-589 / NCTC 13251)</name>
    <dbReference type="NCBI Taxonomy" id="257313"/>
    <lineage>
        <taxon>Bacteria</taxon>
        <taxon>Pseudomonadati</taxon>
        <taxon>Pseudomonadota</taxon>
        <taxon>Betaproteobacteria</taxon>
        <taxon>Burkholderiales</taxon>
        <taxon>Alcaligenaceae</taxon>
        <taxon>Bordetella</taxon>
    </lineage>
</organism>
<dbReference type="EMBL" id="BX640411">
    <property type="protein sequence ID" value="CAE40624.1"/>
    <property type="molecule type" value="Genomic_DNA"/>
</dbReference>
<dbReference type="RefSeq" id="NP_879129.1">
    <property type="nucleotide sequence ID" value="NC_002929.2"/>
</dbReference>
<dbReference type="RefSeq" id="WP_010929705.1">
    <property type="nucleotide sequence ID" value="NZ_CP039022.1"/>
</dbReference>
<dbReference type="SMR" id="Q7W0A6"/>
<dbReference type="STRING" id="257313.BP0244"/>
<dbReference type="PaxDb" id="257313-BP0244"/>
<dbReference type="GeneID" id="69603499"/>
<dbReference type="KEGG" id="bpe:BP0244"/>
<dbReference type="PATRIC" id="fig|257313.5.peg.265"/>
<dbReference type="eggNOG" id="COG0323">
    <property type="taxonomic scope" value="Bacteria"/>
</dbReference>
<dbReference type="HOGENOM" id="CLU_004131_4_2_4"/>
<dbReference type="Proteomes" id="UP000002676">
    <property type="component" value="Chromosome"/>
</dbReference>
<dbReference type="GO" id="GO:0032300">
    <property type="term" value="C:mismatch repair complex"/>
    <property type="evidence" value="ECO:0007669"/>
    <property type="project" value="InterPro"/>
</dbReference>
<dbReference type="GO" id="GO:0005524">
    <property type="term" value="F:ATP binding"/>
    <property type="evidence" value="ECO:0007669"/>
    <property type="project" value="InterPro"/>
</dbReference>
<dbReference type="GO" id="GO:0016887">
    <property type="term" value="F:ATP hydrolysis activity"/>
    <property type="evidence" value="ECO:0007669"/>
    <property type="project" value="InterPro"/>
</dbReference>
<dbReference type="GO" id="GO:0140664">
    <property type="term" value="F:ATP-dependent DNA damage sensor activity"/>
    <property type="evidence" value="ECO:0007669"/>
    <property type="project" value="InterPro"/>
</dbReference>
<dbReference type="GO" id="GO:0030983">
    <property type="term" value="F:mismatched DNA binding"/>
    <property type="evidence" value="ECO:0007669"/>
    <property type="project" value="InterPro"/>
</dbReference>
<dbReference type="GO" id="GO:0006298">
    <property type="term" value="P:mismatch repair"/>
    <property type="evidence" value="ECO:0007669"/>
    <property type="project" value="UniProtKB-UniRule"/>
</dbReference>
<dbReference type="CDD" id="cd16926">
    <property type="entry name" value="HATPase_MutL-MLH-PMS-like"/>
    <property type="match status" value="1"/>
</dbReference>
<dbReference type="CDD" id="cd03482">
    <property type="entry name" value="MutL_Trans_MutL"/>
    <property type="match status" value="1"/>
</dbReference>
<dbReference type="FunFam" id="3.30.565.10:FF:000003">
    <property type="entry name" value="DNA mismatch repair endonuclease MutL"/>
    <property type="match status" value="1"/>
</dbReference>
<dbReference type="Gene3D" id="3.30.230.10">
    <property type="match status" value="1"/>
</dbReference>
<dbReference type="Gene3D" id="3.30.565.10">
    <property type="entry name" value="Histidine kinase-like ATPase, C-terminal domain"/>
    <property type="match status" value="1"/>
</dbReference>
<dbReference type="Gene3D" id="3.30.1540.20">
    <property type="entry name" value="MutL, C-terminal domain, dimerisation subdomain"/>
    <property type="match status" value="1"/>
</dbReference>
<dbReference type="Gene3D" id="3.30.1370.100">
    <property type="entry name" value="MutL, C-terminal domain, regulatory subdomain"/>
    <property type="match status" value="1"/>
</dbReference>
<dbReference type="HAMAP" id="MF_00149">
    <property type="entry name" value="DNA_mis_repair"/>
    <property type="match status" value="1"/>
</dbReference>
<dbReference type="InterPro" id="IPR014762">
    <property type="entry name" value="DNA_mismatch_repair_CS"/>
</dbReference>
<dbReference type="InterPro" id="IPR020667">
    <property type="entry name" value="DNA_mismatch_repair_MutL"/>
</dbReference>
<dbReference type="InterPro" id="IPR013507">
    <property type="entry name" value="DNA_mismatch_S5_2-like"/>
</dbReference>
<dbReference type="InterPro" id="IPR036890">
    <property type="entry name" value="HATPase_C_sf"/>
</dbReference>
<dbReference type="InterPro" id="IPR002099">
    <property type="entry name" value="MutL/Mlh/PMS"/>
</dbReference>
<dbReference type="InterPro" id="IPR038973">
    <property type="entry name" value="MutL/Mlh/Pms-like"/>
</dbReference>
<dbReference type="InterPro" id="IPR014790">
    <property type="entry name" value="MutL_C"/>
</dbReference>
<dbReference type="InterPro" id="IPR042120">
    <property type="entry name" value="MutL_C_dimsub"/>
</dbReference>
<dbReference type="InterPro" id="IPR042121">
    <property type="entry name" value="MutL_C_regsub"/>
</dbReference>
<dbReference type="InterPro" id="IPR037198">
    <property type="entry name" value="MutL_C_sf"/>
</dbReference>
<dbReference type="InterPro" id="IPR020568">
    <property type="entry name" value="Ribosomal_Su5_D2-typ_SF"/>
</dbReference>
<dbReference type="InterPro" id="IPR014721">
    <property type="entry name" value="Ribsml_uS5_D2-typ_fold_subgr"/>
</dbReference>
<dbReference type="NCBIfam" id="TIGR00585">
    <property type="entry name" value="mutl"/>
    <property type="match status" value="1"/>
</dbReference>
<dbReference type="NCBIfam" id="NF000949">
    <property type="entry name" value="PRK00095.1-2"/>
    <property type="match status" value="1"/>
</dbReference>
<dbReference type="PANTHER" id="PTHR10073">
    <property type="entry name" value="DNA MISMATCH REPAIR PROTEIN MLH, PMS, MUTL"/>
    <property type="match status" value="1"/>
</dbReference>
<dbReference type="PANTHER" id="PTHR10073:SF12">
    <property type="entry name" value="DNA MISMATCH REPAIR PROTEIN MLH1"/>
    <property type="match status" value="1"/>
</dbReference>
<dbReference type="Pfam" id="PF01119">
    <property type="entry name" value="DNA_mis_repair"/>
    <property type="match status" value="1"/>
</dbReference>
<dbReference type="Pfam" id="PF13589">
    <property type="entry name" value="HATPase_c_3"/>
    <property type="match status" value="1"/>
</dbReference>
<dbReference type="Pfam" id="PF08676">
    <property type="entry name" value="MutL_C"/>
    <property type="match status" value="1"/>
</dbReference>
<dbReference type="SMART" id="SM01340">
    <property type="entry name" value="DNA_mis_repair"/>
    <property type="match status" value="1"/>
</dbReference>
<dbReference type="SMART" id="SM00853">
    <property type="entry name" value="MutL_C"/>
    <property type="match status" value="1"/>
</dbReference>
<dbReference type="SUPFAM" id="SSF55874">
    <property type="entry name" value="ATPase domain of HSP90 chaperone/DNA topoisomerase II/histidine kinase"/>
    <property type="match status" value="1"/>
</dbReference>
<dbReference type="SUPFAM" id="SSF118116">
    <property type="entry name" value="DNA mismatch repair protein MutL"/>
    <property type="match status" value="1"/>
</dbReference>
<dbReference type="SUPFAM" id="SSF54211">
    <property type="entry name" value="Ribosomal protein S5 domain 2-like"/>
    <property type="match status" value="1"/>
</dbReference>
<dbReference type="PROSITE" id="PS00058">
    <property type="entry name" value="DNA_MISMATCH_REPAIR_1"/>
    <property type="match status" value="1"/>
</dbReference>
<protein>
    <recommendedName>
        <fullName evidence="1">DNA mismatch repair protein MutL</fullName>
    </recommendedName>
</protein>